<proteinExistence type="inferred from homology"/>
<reference key="1">
    <citation type="journal article" date="2012" name="BMC Genomics">
        <title>Comparative genomics and transcriptomics of lineages I, II, and III strains of Listeria monocytogenes.</title>
        <authorList>
            <person name="Hain T."/>
            <person name="Ghai R."/>
            <person name="Billion A."/>
            <person name="Kuenne C.T."/>
            <person name="Steinweg C."/>
            <person name="Izar B."/>
            <person name="Mohamed W."/>
            <person name="Mraheil M."/>
            <person name="Domann E."/>
            <person name="Schaffrath S."/>
            <person name="Karst U."/>
            <person name="Goesmann A."/>
            <person name="Oehm S."/>
            <person name="Puhler A."/>
            <person name="Merkl R."/>
            <person name="Vorwerk S."/>
            <person name="Glaser P."/>
            <person name="Garrido P."/>
            <person name="Rusniok C."/>
            <person name="Buchrieser C."/>
            <person name="Goebel W."/>
            <person name="Chakraborty T."/>
        </authorList>
    </citation>
    <scope>NUCLEOTIDE SEQUENCE [LARGE SCALE GENOMIC DNA]</scope>
    <source>
        <strain>CLIP80459</strain>
    </source>
</reference>
<name>KCY_LISMC</name>
<evidence type="ECO:0000255" key="1">
    <source>
        <dbReference type="HAMAP-Rule" id="MF_00238"/>
    </source>
</evidence>
<keyword id="KW-0067">ATP-binding</keyword>
<keyword id="KW-0963">Cytoplasm</keyword>
<keyword id="KW-0418">Kinase</keyword>
<keyword id="KW-0547">Nucleotide-binding</keyword>
<keyword id="KW-0808">Transferase</keyword>
<feature type="chain" id="PRO_1000204454" description="Cytidylate kinase">
    <location>
        <begin position="1"/>
        <end position="224"/>
    </location>
</feature>
<feature type="binding site" evidence="1">
    <location>
        <begin position="11"/>
        <end position="19"/>
    </location>
    <ligand>
        <name>ATP</name>
        <dbReference type="ChEBI" id="CHEBI:30616"/>
    </ligand>
</feature>
<organism>
    <name type="scientific">Listeria monocytogenes serotype 4b (strain CLIP80459)</name>
    <dbReference type="NCBI Taxonomy" id="568819"/>
    <lineage>
        <taxon>Bacteria</taxon>
        <taxon>Bacillati</taxon>
        <taxon>Bacillota</taxon>
        <taxon>Bacilli</taxon>
        <taxon>Bacillales</taxon>
        <taxon>Listeriaceae</taxon>
        <taxon>Listeria</taxon>
    </lineage>
</organism>
<dbReference type="EC" id="2.7.4.25" evidence="1"/>
<dbReference type="EMBL" id="FM242711">
    <property type="protein sequence ID" value="CAS05714.1"/>
    <property type="molecule type" value="Genomic_DNA"/>
</dbReference>
<dbReference type="RefSeq" id="WP_003725930.1">
    <property type="nucleotide sequence ID" value="NC_012488.1"/>
</dbReference>
<dbReference type="SMR" id="C1KWN9"/>
<dbReference type="KEGG" id="lmc:Lm4b_01956"/>
<dbReference type="HOGENOM" id="CLU_079959_0_2_9"/>
<dbReference type="GO" id="GO:0005829">
    <property type="term" value="C:cytosol"/>
    <property type="evidence" value="ECO:0007669"/>
    <property type="project" value="TreeGrafter"/>
</dbReference>
<dbReference type="GO" id="GO:0005524">
    <property type="term" value="F:ATP binding"/>
    <property type="evidence" value="ECO:0007669"/>
    <property type="project" value="UniProtKB-UniRule"/>
</dbReference>
<dbReference type="GO" id="GO:0036430">
    <property type="term" value="F:CMP kinase activity"/>
    <property type="evidence" value="ECO:0007669"/>
    <property type="project" value="RHEA"/>
</dbReference>
<dbReference type="GO" id="GO:0036431">
    <property type="term" value="F:dCMP kinase activity"/>
    <property type="evidence" value="ECO:0007669"/>
    <property type="project" value="RHEA"/>
</dbReference>
<dbReference type="GO" id="GO:0015949">
    <property type="term" value="P:nucleobase-containing small molecule interconversion"/>
    <property type="evidence" value="ECO:0007669"/>
    <property type="project" value="TreeGrafter"/>
</dbReference>
<dbReference type="GO" id="GO:0006220">
    <property type="term" value="P:pyrimidine nucleotide metabolic process"/>
    <property type="evidence" value="ECO:0007669"/>
    <property type="project" value="UniProtKB-UniRule"/>
</dbReference>
<dbReference type="CDD" id="cd02020">
    <property type="entry name" value="CMPK"/>
    <property type="match status" value="1"/>
</dbReference>
<dbReference type="FunFam" id="3.40.50.300:FF:000484">
    <property type="entry name" value="Cytidylate kinase"/>
    <property type="match status" value="1"/>
</dbReference>
<dbReference type="Gene3D" id="3.40.50.300">
    <property type="entry name" value="P-loop containing nucleotide triphosphate hydrolases"/>
    <property type="match status" value="1"/>
</dbReference>
<dbReference type="HAMAP" id="MF_00238">
    <property type="entry name" value="Cytidyl_kinase_type1"/>
    <property type="match status" value="1"/>
</dbReference>
<dbReference type="InterPro" id="IPR003136">
    <property type="entry name" value="Cytidylate_kin"/>
</dbReference>
<dbReference type="InterPro" id="IPR011994">
    <property type="entry name" value="Cytidylate_kinase_dom"/>
</dbReference>
<dbReference type="InterPro" id="IPR027417">
    <property type="entry name" value="P-loop_NTPase"/>
</dbReference>
<dbReference type="NCBIfam" id="TIGR00017">
    <property type="entry name" value="cmk"/>
    <property type="match status" value="1"/>
</dbReference>
<dbReference type="PANTHER" id="PTHR21299:SF2">
    <property type="entry name" value="CYTIDYLATE KINASE"/>
    <property type="match status" value="1"/>
</dbReference>
<dbReference type="PANTHER" id="PTHR21299">
    <property type="entry name" value="CYTIDYLATE KINASE/PANTOATE-BETA-ALANINE LIGASE"/>
    <property type="match status" value="1"/>
</dbReference>
<dbReference type="Pfam" id="PF02224">
    <property type="entry name" value="Cytidylate_kin"/>
    <property type="match status" value="1"/>
</dbReference>
<dbReference type="SUPFAM" id="SSF52540">
    <property type="entry name" value="P-loop containing nucleoside triphosphate hydrolases"/>
    <property type="match status" value="1"/>
</dbReference>
<comment type="catalytic activity">
    <reaction evidence="1">
        <text>CMP + ATP = CDP + ADP</text>
        <dbReference type="Rhea" id="RHEA:11600"/>
        <dbReference type="ChEBI" id="CHEBI:30616"/>
        <dbReference type="ChEBI" id="CHEBI:58069"/>
        <dbReference type="ChEBI" id="CHEBI:60377"/>
        <dbReference type="ChEBI" id="CHEBI:456216"/>
        <dbReference type="EC" id="2.7.4.25"/>
    </reaction>
</comment>
<comment type="catalytic activity">
    <reaction evidence="1">
        <text>dCMP + ATP = dCDP + ADP</text>
        <dbReference type="Rhea" id="RHEA:25094"/>
        <dbReference type="ChEBI" id="CHEBI:30616"/>
        <dbReference type="ChEBI" id="CHEBI:57566"/>
        <dbReference type="ChEBI" id="CHEBI:58593"/>
        <dbReference type="ChEBI" id="CHEBI:456216"/>
        <dbReference type="EC" id="2.7.4.25"/>
    </reaction>
</comment>
<comment type="subcellular location">
    <subcellularLocation>
        <location evidence="1">Cytoplasm</location>
    </subcellularLocation>
</comment>
<comment type="similarity">
    <text evidence="1">Belongs to the cytidylate kinase family. Type 1 subfamily.</text>
</comment>
<accession>C1KWN9</accession>
<gene>
    <name evidence="1" type="primary">cmk</name>
    <name type="ordered locus">Lm4b_01956</name>
</gene>
<sequence>MTKKICIAIDGPAAAGKSTVAKIVAKKLRFVYIDTGAMYRAVTYIALKNNIAYEDEKAIATLLQKTVIRFEPGEVQQVFVGEENVTEVIRSLEVTNHVSIVAAHPSIREALQERQQVFATEGGIVMDGRDIGTAVLPNAELKIFLLASVEERAERRYKENMAKGFAGDLGQLKKEIEERDHLDYTRTHSPLKKADDAIEVDTTSMSIDEVANKILSLAELKINN</sequence>
<protein>
    <recommendedName>
        <fullName evidence="1">Cytidylate kinase</fullName>
        <shortName evidence="1">CK</shortName>
        <ecNumber evidence="1">2.7.4.25</ecNumber>
    </recommendedName>
    <alternativeName>
        <fullName evidence="1">Cytidine monophosphate kinase</fullName>
        <shortName evidence="1">CMP kinase</shortName>
    </alternativeName>
</protein>